<feature type="chain" id="PRO_1000072909" description="tRNA/tmRNA (uracil-C(5))-methyltransferase">
    <location>
        <begin position="1"/>
        <end position="366"/>
    </location>
</feature>
<feature type="active site" description="Nucleophile" evidence="1">
    <location>
        <position position="324"/>
    </location>
</feature>
<feature type="active site" description="Proton acceptor" evidence="1">
    <location>
        <position position="358"/>
    </location>
</feature>
<feature type="binding site" evidence="1">
    <location>
        <position position="190"/>
    </location>
    <ligand>
        <name>S-adenosyl-L-methionine</name>
        <dbReference type="ChEBI" id="CHEBI:59789"/>
    </ligand>
</feature>
<feature type="binding site" evidence="1">
    <location>
        <position position="218"/>
    </location>
    <ligand>
        <name>S-adenosyl-L-methionine</name>
        <dbReference type="ChEBI" id="CHEBI:59789"/>
    </ligand>
</feature>
<feature type="binding site" evidence="1">
    <location>
        <position position="223"/>
    </location>
    <ligand>
        <name>S-adenosyl-L-methionine</name>
        <dbReference type="ChEBI" id="CHEBI:59789"/>
    </ligand>
</feature>
<feature type="binding site" evidence="1">
    <location>
        <position position="239"/>
    </location>
    <ligand>
        <name>S-adenosyl-L-methionine</name>
        <dbReference type="ChEBI" id="CHEBI:59789"/>
    </ligand>
</feature>
<feature type="binding site" evidence="1">
    <location>
        <position position="299"/>
    </location>
    <ligand>
        <name>S-adenosyl-L-methionine</name>
        <dbReference type="ChEBI" id="CHEBI:59789"/>
    </ligand>
</feature>
<evidence type="ECO:0000255" key="1">
    <source>
        <dbReference type="HAMAP-Rule" id="MF_01011"/>
    </source>
</evidence>
<organism>
    <name type="scientific">Enterobacter sp. (strain 638)</name>
    <dbReference type="NCBI Taxonomy" id="399742"/>
    <lineage>
        <taxon>Bacteria</taxon>
        <taxon>Pseudomonadati</taxon>
        <taxon>Pseudomonadota</taxon>
        <taxon>Gammaproteobacteria</taxon>
        <taxon>Enterobacterales</taxon>
        <taxon>Enterobacteriaceae</taxon>
        <taxon>Enterobacter</taxon>
    </lineage>
</organism>
<reference key="1">
    <citation type="journal article" date="2010" name="PLoS Genet.">
        <title>Genome sequence of the plant growth promoting endophytic bacterium Enterobacter sp. 638.</title>
        <authorList>
            <person name="Taghavi S."/>
            <person name="van der Lelie D."/>
            <person name="Hoffman A."/>
            <person name="Zhang Y.B."/>
            <person name="Walla M.D."/>
            <person name="Vangronsveld J."/>
            <person name="Newman L."/>
            <person name="Monchy S."/>
        </authorList>
    </citation>
    <scope>NUCLEOTIDE SEQUENCE [LARGE SCALE GENOMIC DNA]</scope>
    <source>
        <strain>638</strain>
    </source>
</reference>
<dbReference type="EC" id="2.1.1.-" evidence="1"/>
<dbReference type="EC" id="2.1.1.35" evidence="1"/>
<dbReference type="EMBL" id="CP000653">
    <property type="protein sequence ID" value="ABP62676.1"/>
    <property type="molecule type" value="Genomic_DNA"/>
</dbReference>
<dbReference type="RefSeq" id="WP_015960980.1">
    <property type="nucleotide sequence ID" value="NC_009436.1"/>
</dbReference>
<dbReference type="SMR" id="A4WG46"/>
<dbReference type="STRING" id="399742.Ent638_4021"/>
<dbReference type="KEGG" id="ent:Ent638_4021"/>
<dbReference type="eggNOG" id="COG2265">
    <property type="taxonomic scope" value="Bacteria"/>
</dbReference>
<dbReference type="HOGENOM" id="CLU_043022_0_0_6"/>
<dbReference type="OrthoDB" id="9804590at2"/>
<dbReference type="Proteomes" id="UP000000230">
    <property type="component" value="Chromosome"/>
</dbReference>
<dbReference type="GO" id="GO:0005829">
    <property type="term" value="C:cytosol"/>
    <property type="evidence" value="ECO:0007669"/>
    <property type="project" value="TreeGrafter"/>
</dbReference>
<dbReference type="GO" id="GO:0019843">
    <property type="term" value="F:rRNA binding"/>
    <property type="evidence" value="ECO:0007669"/>
    <property type="project" value="TreeGrafter"/>
</dbReference>
<dbReference type="GO" id="GO:0030697">
    <property type="term" value="F:tRNA (uracil(54)-C5)-methyltransferase activity, S-adenosyl methionine-dependent"/>
    <property type="evidence" value="ECO:0007669"/>
    <property type="project" value="UniProtKB-UniRule"/>
</dbReference>
<dbReference type="GO" id="GO:0000049">
    <property type="term" value="F:tRNA binding"/>
    <property type="evidence" value="ECO:0007669"/>
    <property type="project" value="TreeGrafter"/>
</dbReference>
<dbReference type="GO" id="GO:0030488">
    <property type="term" value="P:tRNA methylation"/>
    <property type="evidence" value="ECO:0007669"/>
    <property type="project" value="UniProtKB-UniRule"/>
</dbReference>
<dbReference type="CDD" id="cd02440">
    <property type="entry name" value="AdoMet_MTases"/>
    <property type="match status" value="1"/>
</dbReference>
<dbReference type="FunFam" id="2.40.50.1070:FF:000001">
    <property type="entry name" value="tRNA/tmRNA (uracil-C(5))-methyltransferase"/>
    <property type="match status" value="1"/>
</dbReference>
<dbReference type="FunFam" id="3.40.50.150:FF:000012">
    <property type="entry name" value="tRNA/tmRNA (uracil-C(5))-methyltransferase"/>
    <property type="match status" value="1"/>
</dbReference>
<dbReference type="Gene3D" id="2.40.50.1070">
    <property type="match status" value="1"/>
</dbReference>
<dbReference type="Gene3D" id="3.40.50.150">
    <property type="entry name" value="Vaccinia Virus protein VP39"/>
    <property type="match status" value="1"/>
</dbReference>
<dbReference type="HAMAP" id="MF_01011">
    <property type="entry name" value="RNA_methyltr_TrmA"/>
    <property type="match status" value="1"/>
</dbReference>
<dbReference type="InterPro" id="IPR030390">
    <property type="entry name" value="MeTrfase_TrmA_AS"/>
</dbReference>
<dbReference type="InterPro" id="IPR030391">
    <property type="entry name" value="MeTrfase_TrmA_CS"/>
</dbReference>
<dbReference type="InterPro" id="IPR029063">
    <property type="entry name" value="SAM-dependent_MTases_sf"/>
</dbReference>
<dbReference type="InterPro" id="IPR011869">
    <property type="entry name" value="TrmA_MeTrfase"/>
</dbReference>
<dbReference type="InterPro" id="IPR010280">
    <property type="entry name" value="U5_MeTrfase_fam"/>
</dbReference>
<dbReference type="NCBIfam" id="TIGR02143">
    <property type="entry name" value="trmA_only"/>
    <property type="match status" value="1"/>
</dbReference>
<dbReference type="PANTHER" id="PTHR47790">
    <property type="entry name" value="TRNA/TMRNA (URACIL-C(5))-METHYLTRANSFERASE"/>
    <property type="match status" value="1"/>
</dbReference>
<dbReference type="PANTHER" id="PTHR47790:SF2">
    <property type="entry name" value="TRNA_TMRNA (URACIL-C(5))-METHYLTRANSFERASE"/>
    <property type="match status" value="1"/>
</dbReference>
<dbReference type="Pfam" id="PF05958">
    <property type="entry name" value="tRNA_U5-meth_tr"/>
    <property type="match status" value="1"/>
</dbReference>
<dbReference type="SUPFAM" id="SSF53335">
    <property type="entry name" value="S-adenosyl-L-methionine-dependent methyltransferases"/>
    <property type="match status" value="1"/>
</dbReference>
<dbReference type="PROSITE" id="PS51687">
    <property type="entry name" value="SAM_MT_RNA_M5U"/>
    <property type="match status" value="1"/>
</dbReference>
<dbReference type="PROSITE" id="PS01230">
    <property type="entry name" value="TRMA_1"/>
    <property type="match status" value="1"/>
</dbReference>
<dbReference type="PROSITE" id="PS01231">
    <property type="entry name" value="TRMA_2"/>
    <property type="match status" value="1"/>
</dbReference>
<sequence length="366" mass="42073">MTPEHLPTEQYDAQLAEKVVRLQSMMTPFAAPVPEVFRSPVSHYRMRAEFRIWHDGDDLYHIIFDQQTKSRIRVNSFPAASELINQLMTLMIEGVRNNPQLRHKLFQIDYLTTQSNQAIVSMLYHKKLGDEWRKEAEVLRDALRAQNINVHLIGRATKTKIMLDQDYVDERLPVAGKEMIYRQVENSFTQPNAAMNVQMLEWALSATEGSKGDLLELYCGNGNFSLALARNFERVLATEIAKPSVASAQYNIAANHIDNVQIIRMAAEEFTQAMNGEREFNRLQGIDLKSYQCETIFVDPPRSGLDSETEKMVQAYPRILYISCNPETLCKNLETLSQTHKVERLALFDQFPYTHHMECGVLLTLK</sequence>
<comment type="function">
    <text evidence="1">Dual-specificity methyltransferase that catalyzes the formation of 5-methyluridine at position 54 (m5U54) in all tRNAs, and that of position 341 (m5U341) in tmRNA (transfer-mRNA).</text>
</comment>
<comment type="catalytic activity">
    <reaction evidence="1">
        <text>uridine(54) in tRNA + S-adenosyl-L-methionine = 5-methyluridine(54) in tRNA + S-adenosyl-L-homocysteine + H(+)</text>
        <dbReference type="Rhea" id="RHEA:42712"/>
        <dbReference type="Rhea" id="RHEA-COMP:10167"/>
        <dbReference type="Rhea" id="RHEA-COMP:10193"/>
        <dbReference type="ChEBI" id="CHEBI:15378"/>
        <dbReference type="ChEBI" id="CHEBI:57856"/>
        <dbReference type="ChEBI" id="CHEBI:59789"/>
        <dbReference type="ChEBI" id="CHEBI:65315"/>
        <dbReference type="ChEBI" id="CHEBI:74447"/>
        <dbReference type="EC" id="2.1.1.35"/>
    </reaction>
</comment>
<comment type="catalytic activity">
    <reaction evidence="1">
        <text>uridine(341) in tmRNA + S-adenosyl-L-methionine = 5-methyluridine(341) in tmRNA + S-adenosyl-L-homocysteine + H(+)</text>
        <dbReference type="Rhea" id="RHEA:43612"/>
        <dbReference type="Rhea" id="RHEA-COMP:10630"/>
        <dbReference type="Rhea" id="RHEA-COMP:10631"/>
        <dbReference type="ChEBI" id="CHEBI:15378"/>
        <dbReference type="ChEBI" id="CHEBI:57856"/>
        <dbReference type="ChEBI" id="CHEBI:59789"/>
        <dbReference type="ChEBI" id="CHEBI:65315"/>
        <dbReference type="ChEBI" id="CHEBI:74447"/>
    </reaction>
</comment>
<comment type="similarity">
    <text evidence="1">Belongs to the class I-like SAM-binding methyltransferase superfamily. RNA M5U methyltransferase family. TrmA subfamily.</text>
</comment>
<accession>A4WG46</accession>
<proteinExistence type="inferred from homology"/>
<name>TRMA_ENT38</name>
<gene>
    <name evidence="1" type="primary">trmA</name>
    <name type="ordered locus">Ent638_4021</name>
</gene>
<keyword id="KW-0489">Methyltransferase</keyword>
<keyword id="KW-0949">S-adenosyl-L-methionine</keyword>
<keyword id="KW-0808">Transferase</keyword>
<keyword id="KW-0819">tRNA processing</keyword>
<protein>
    <recommendedName>
        <fullName evidence="1">tRNA/tmRNA (uracil-C(5))-methyltransferase</fullName>
        <ecNumber evidence="1">2.1.1.-</ecNumber>
        <ecNumber evidence="1">2.1.1.35</ecNumber>
    </recommendedName>
    <alternativeName>
        <fullName evidence="1">tRNA (uracil(54)-C(5))-methyltransferase</fullName>
    </alternativeName>
    <alternativeName>
        <fullName evidence="1">tRNA(m5U54)-methyltransferase</fullName>
        <shortName evidence="1">RUMT</shortName>
    </alternativeName>
    <alternativeName>
        <fullName evidence="1">tmRNA (uracil(341)-C(5))-methyltransferase</fullName>
    </alternativeName>
</protein>